<feature type="chain" id="PRO_0000222704" description="Core protein VP4">
    <location>
        <begin position="1"/>
        <end position="644"/>
    </location>
</feature>
<protein>
    <recommendedName>
        <fullName>Core protein VP4</fullName>
    </recommendedName>
</protein>
<comment type="function">
    <text>The VP4 protein is one of the five proteins (with VP1, VP3, VP6 and VP7) which form the inner capsid of the virus.</text>
</comment>
<comment type="subcellular location">
    <subcellularLocation>
        <location evidence="1">Virion</location>
    </subcellularLocation>
</comment>
<comment type="similarity">
    <text evidence="1">Belongs to the orbivirus VP4 family.</text>
</comment>
<reference key="1">
    <citation type="journal article" date="1993" name="Virology">
        <title>Conservation of the segment 4 gene sequence and of a leucine zipper motif in VP4 among five US bluetongue viruses.</title>
        <authorList>
            <person name="Huang I.J."/>
            <person name="Hayama E."/>
            <person name="Jeong Y.J."/>
            <person name="Li J.K.-K."/>
        </authorList>
    </citation>
    <scope>NUCLEOTIDE SEQUENCE [MRNA]</scope>
</reference>
<name>VP4_BTV2A</name>
<keyword id="KW-0167">Capsid protein</keyword>
<keyword id="KW-1152">Outer capsid protein</keyword>
<keyword id="KW-0946">Virion</keyword>
<evidence type="ECO:0000305" key="1"/>
<dbReference type="EMBL" id="L08637">
    <property type="protein sequence ID" value="AAA42824.1"/>
    <property type="molecule type" value="mRNA"/>
</dbReference>
<dbReference type="SMR" id="P33427"/>
<dbReference type="GO" id="GO:0039624">
    <property type="term" value="C:viral outer capsid"/>
    <property type="evidence" value="ECO:0007669"/>
    <property type="project" value="UniProtKB-KW"/>
</dbReference>
<dbReference type="CDD" id="cd20758">
    <property type="entry name" value="capping_2-OMTase_Orbivirus"/>
    <property type="match status" value="1"/>
</dbReference>
<dbReference type="Gene3D" id="1.20.1280.200">
    <property type="entry name" value="Orbivirus VP4 core protein, C-terminal domain"/>
    <property type="match status" value="1"/>
</dbReference>
<dbReference type="Gene3D" id="3.40.50.150">
    <property type="entry name" value="Vaccinia Virus protein VP39"/>
    <property type="match status" value="1"/>
</dbReference>
<dbReference type="InterPro" id="IPR007753">
    <property type="entry name" value="Orbi_VP4"/>
</dbReference>
<dbReference type="InterPro" id="IPR043026">
    <property type="entry name" value="Orbi_VP4_C"/>
</dbReference>
<dbReference type="InterPro" id="IPR029063">
    <property type="entry name" value="SAM-dependent_MTases_sf"/>
</dbReference>
<dbReference type="Pfam" id="PF05059">
    <property type="entry name" value="Orbi_VP4"/>
    <property type="match status" value="1"/>
</dbReference>
<organism>
    <name type="scientific">Bluetongue virus 2 (isolate USA)</name>
    <name type="common">BTV 2</name>
    <dbReference type="NCBI Taxonomy" id="10907"/>
    <lineage>
        <taxon>Viruses</taxon>
        <taxon>Riboviria</taxon>
        <taxon>Orthornavirae</taxon>
        <taxon>Duplornaviricota</taxon>
        <taxon>Resentoviricetes</taxon>
        <taxon>Reovirales</taxon>
        <taxon>Sedoreoviridae</taxon>
        <taxon>Orbivirus</taxon>
        <taxon>Bluetongue virus</taxon>
    </lineage>
</organism>
<organismHost>
    <name type="scientific">Antilocapra americana</name>
    <name type="common">Pronghorn</name>
    <dbReference type="NCBI Taxonomy" id="9891"/>
</organismHost>
<organismHost>
    <name type="scientific">Bos taurus</name>
    <name type="common">Bovine</name>
    <dbReference type="NCBI Taxonomy" id="9913"/>
</organismHost>
<organismHost>
    <name type="scientific">Capra hircus</name>
    <name type="common">Goat</name>
    <dbReference type="NCBI Taxonomy" id="9925"/>
</organismHost>
<organismHost>
    <name type="scientific">Culicoides variipennis</name>
    <name type="common">Biting midge</name>
    <dbReference type="NCBI Taxonomy" id="46212"/>
</organismHost>
<organismHost>
    <name type="scientific">Ovis aries</name>
    <name type="common">Sheep</name>
    <dbReference type="NCBI Taxonomy" id="9940"/>
</organismHost>
<accession>P33427</accession>
<gene>
    <name type="primary">Segment-4</name>
</gene>
<sequence>MPEPHAVLYVTNELSHIVKSGFLPIWRLTGVESLNVLWLENGKYATDVYAYGDVSKWTIRQLRGHGFIFISTHKNIQLADIIKTVDVRIPREVAKSQDMKAFENEIGRRRIRMRKGFGDALRNKLFKMAIEFHGSEAETLNDANPRLHKIYGMPEMPPLYIEYAEIGTRFDDEPTDEKLVSMLDYIVYSAEEVHYVGCGDLRTIMQFKKRSPGRFRRVLWHVYHPIAPESSDPNVIVHNVMVDSKKDILKHMNFLKRVERLFIWDVSSDRSQMDDDEWESTRFAEDRLGEEIAYEMGGAFSSALIKHRIPNSRDEYHCISTYLLPQPGADADMYELRNFMRLKGYSHVDRHMHPDASVMKVVSRDVRKMVELYHGRDRGRFVKNRLFEHLHIVRKNGLLHESDEPRADLFYLTNRCNMGLEPSIYEVMKKSVIATAWVGRAPLYDYDDFALPRSTVMLNGSYHDIRILDGNGAILFLMWKYPDIVKKDLTYDHAWAMNFAVSLKEPIPDPPVPDISLCRFIGLRVESSVLRVRNPTLHETADELKRMGLDLSGHLYVTLMSGAYVTDLFWWFKMILDWSAQSKEQKLRDLKRSAAEVIEWKEQMAERPWHVRNSLIAALREYKRKMGIREGASIDSWLELLRHL</sequence>
<proteinExistence type="evidence at transcript level"/>